<feature type="chain" id="PRO_1000116856" description="SsrA-binding protein">
    <location>
        <begin position="1"/>
        <end position="156"/>
    </location>
</feature>
<accession>C1FQX0</accession>
<protein>
    <recommendedName>
        <fullName evidence="1">SsrA-binding protein</fullName>
    </recommendedName>
    <alternativeName>
        <fullName evidence="1">Small protein B</fullName>
    </alternativeName>
</protein>
<dbReference type="EMBL" id="CP001581">
    <property type="protein sequence ID" value="ACO87119.1"/>
    <property type="molecule type" value="Genomic_DNA"/>
</dbReference>
<dbReference type="RefSeq" id="WP_003356515.1">
    <property type="nucleotide sequence ID" value="NC_012563.1"/>
</dbReference>
<dbReference type="SMR" id="C1FQX0"/>
<dbReference type="GeneID" id="5184489"/>
<dbReference type="KEGG" id="cby:CLM_0284"/>
<dbReference type="eggNOG" id="COG0691">
    <property type="taxonomic scope" value="Bacteria"/>
</dbReference>
<dbReference type="HOGENOM" id="CLU_108953_0_0_9"/>
<dbReference type="Proteomes" id="UP000001374">
    <property type="component" value="Chromosome"/>
</dbReference>
<dbReference type="GO" id="GO:0005829">
    <property type="term" value="C:cytosol"/>
    <property type="evidence" value="ECO:0007669"/>
    <property type="project" value="TreeGrafter"/>
</dbReference>
<dbReference type="GO" id="GO:0003723">
    <property type="term" value="F:RNA binding"/>
    <property type="evidence" value="ECO:0007669"/>
    <property type="project" value="UniProtKB-UniRule"/>
</dbReference>
<dbReference type="GO" id="GO:0070929">
    <property type="term" value="P:trans-translation"/>
    <property type="evidence" value="ECO:0007669"/>
    <property type="project" value="UniProtKB-UniRule"/>
</dbReference>
<dbReference type="CDD" id="cd09294">
    <property type="entry name" value="SmpB"/>
    <property type="match status" value="1"/>
</dbReference>
<dbReference type="Gene3D" id="2.40.280.10">
    <property type="match status" value="1"/>
</dbReference>
<dbReference type="HAMAP" id="MF_00023">
    <property type="entry name" value="SmpB"/>
    <property type="match status" value="1"/>
</dbReference>
<dbReference type="InterPro" id="IPR023620">
    <property type="entry name" value="SmpB"/>
</dbReference>
<dbReference type="InterPro" id="IPR000037">
    <property type="entry name" value="SsrA-bd_prot"/>
</dbReference>
<dbReference type="InterPro" id="IPR020081">
    <property type="entry name" value="SsrA-bd_prot_CS"/>
</dbReference>
<dbReference type="NCBIfam" id="NF003843">
    <property type="entry name" value="PRK05422.1"/>
    <property type="match status" value="1"/>
</dbReference>
<dbReference type="NCBIfam" id="TIGR00086">
    <property type="entry name" value="smpB"/>
    <property type="match status" value="1"/>
</dbReference>
<dbReference type="PANTHER" id="PTHR30308:SF2">
    <property type="entry name" value="SSRA-BINDING PROTEIN"/>
    <property type="match status" value="1"/>
</dbReference>
<dbReference type="PANTHER" id="PTHR30308">
    <property type="entry name" value="TMRNA-BINDING COMPONENT OF TRANS-TRANSLATION TAGGING COMPLEX"/>
    <property type="match status" value="1"/>
</dbReference>
<dbReference type="Pfam" id="PF01668">
    <property type="entry name" value="SmpB"/>
    <property type="match status" value="1"/>
</dbReference>
<dbReference type="SUPFAM" id="SSF74982">
    <property type="entry name" value="Small protein B (SmpB)"/>
    <property type="match status" value="1"/>
</dbReference>
<dbReference type="PROSITE" id="PS01317">
    <property type="entry name" value="SSRP"/>
    <property type="match status" value="1"/>
</dbReference>
<sequence length="156" mass="18155">MSKKKGSNTLAENRKARHDYFIEETYEAGIELVGTEVKSIRQGKANLKDSYAEIRNGEVFVRNMHISPYEQGNIYNKDPLRDRKLLLHKSEIYKLVGFTTQQGYTLIPLSLYLKHGRVKVSLAVAKGKKNYDKRDAMLEKAAKREMDRQIKERSRY</sequence>
<evidence type="ECO:0000255" key="1">
    <source>
        <dbReference type="HAMAP-Rule" id="MF_00023"/>
    </source>
</evidence>
<reference key="1">
    <citation type="submission" date="2008-10" db="EMBL/GenBank/DDBJ databases">
        <title>Genome sequence of Clostridium botulinum A2 Kyoto.</title>
        <authorList>
            <person name="Shrivastava S."/>
            <person name="Brinkac L.M."/>
            <person name="Brown J.L."/>
            <person name="Bruce D."/>
            <person name="Detter C.C."/>
            <person name="Johnson E.A."/>
            <person name="Munk C.A."/>
            <person name="Smith L.A."/>
            <person name="Smith T.J."/>
            <person name="Sutton G."/>
            <person name="Brettin T.S."/>
        </authorList>
    </citation>
    <scope>NUCLEOTIDE SEQUENCE [LARGE SCALE GENOMIC DNA]</scope>
    <source>
        <strain>Kyoto / Type A2</strain>
    </source>
</reference>
<gene>
    <name evidence="1" type="primary">smpB</name>
    <name type="ordered locus">CLM_0284</name>
</gene>
<comment type="function">
    <text evidence="1">Required for rescue of stalled ribosomes mediated by trans-translation. Binds to transfer-messenger RNA (tmRNA), required for stable association of tmRNA with ribosomes. tmRNA and SmpB together mimic tRNA shape, replacing the anticodon stem-loop with SmpB. tmRNA is encoded by the ssrA gene; the 2 termini fold to resemble tRNA(Ala) and it encodes a 'tag peptide', a short internal open reading frame. During trans-translation Ala-aminoacylated tmRNA acts like a tRNA, entering the A-site of stalled ribosomes, displacing the stalled mRNA. The ribosome then switches to translate the ORF on the tmRNA; the nascent peptide is terminated with the 'tag peptide' encoded by the tmRNA and targeted for degradation. The ribosome is freed to recommence translation, which seems to be the essential function of trans-translation.</text>
</comment>
<comment type="subcellular location">
    <subcellularLocation>
        <location evidence="1">Cytoplasm</location>
    </subcellularLocation>
    <text evidence="1">The tmRNA-SmpB complex associates with stalled 70S ribosomes.</text>
</comment>
<comment type="similarity">
    <text evidence="1">Belongs to the SmpB family.</text>
</comment>
<keyword id="KW-0963">Cytoplasm</keyword>
<keyword id="KW-0694">RNA-binding</keyword>
<organism>
    <name type="scientific">Clostridium botulinum (strain Kyoto / Type A2)</name>
    <dbReference type="NCBI Taxonomy" id="536232"/>
    <lineage>
        <taxon>Bacteria</taxon>
        <taxon>Bacillati</taxon>
        <taxon>Bacillota</taxon>
        <taxon>Clostridia</taxon>
        <taxon>Eubacteriales</taxon>
        <taxon>Clostridiaceae</taxon>
        <taxon>Clostridium</taxon>
    </lineage>
</organism>
<proteinExistence type="inferred from homology"/>
<name>SSRP_CLOBJ</name>